<reference key="1">
    <citation type="journal article" date="2008" name="J. Bacteriol.">
        <title>The complete genome sequence of Actinobacillus pleuropneumoniae L20 (serotype 5b).</title>
        <authorList>
            <person name="Foote S.J."/>
            <person name="Bosse J.T."/>
            <person name="Bouevitch A.B."/>
            <person name="Langford P.R."/>
            <person name="Young N.M."/>
            <person name="Nash J.H.E."/>
        </authorList>
    </citation>
    <scope>NUCLEOTIDE SEQUENCE [LARGE SCALE GENOMIC DNA]</scope>
    <source>
        <strain>L20</strain>
    </source>
</reference>
<dbReference type="EC" id="3.5.99.6" evidence="1"/>
<dbReference type="EMBL" id="CP000569">
    <property type="protein sequence ID" value="ABN74839.1"/>
    <property type="molecule type" value="Genomic_DNA"/>
</dbReference>
<dbReference type="RefSeq" id="WP_005599267.1">
    <property type="nucleotide sequence ID" value="NC_009053.1"/>
</dbReference>
<dbReference type="SMR" id="A3N353"/>
<dbReference type="STRING" id="416269.APL_1755"/>
<dbReference type="EnsemblBacteria" id="ABN74839">
    <property type="protein sequence ID" value="ABN74839"/>
    <property type="gene ID" value="APL_1755"/>
</dbReference>
<dbReference type="GeneID" id="48600047"/>
<dbReference type="KEGG" id="apl:APL_1755"/>
<dbReference type="eggNOG" id="COG0363">
    <property type="taxonomic scope" value="Bacteria"/>
</dbReference>
<dbReference type="HOGENOM" id="CLU_049611_0_1_6"/>
<dbReference type="UniPathway" id="UPA00629">
    <property type="reaction ID" value="UER00684"/>
</dbReference>
<dbReference type="Proteomes" id="UP000001432">
    <property type="component" value="Chromosome"/>
</dbReference>
<dbReference type="GO" id="GO:0005737">
    <property type="term" value="C:cytoplasm"/>
    <property type="evidence" value="ECO:0007669"/>
    <property type="project" value="TreeGrafter"/>
</dbReference>
<dbReference type="GO" id="GO:0004342">
    <property type="term" value="F:glucosamine-6-phosphate deaminase activity"/>
    <property type="evidence" value="ECO:0007669"/>
    <property type="project" value="UniProtKB-UniRule"/>
</dbReference>
<dbReference type="GO" id="GO:0042802">
    <property type="term" value="F:identical protein binding"/>
    <property type="evidence" value="ECO:0007669"/>
    <property type="project" value="TreeGrafter"/>
</dbReference>
<dbReference type="GO" id="GO:0005975">
    <property type="term" value="P:carbohydrate metabolic process"/>
    <property type="evidence" value="ECO:0007669"/>
    <property type="project" value="InterPro"/>
</dbReference>
<dbReference type="GO" id="GO:0006043">
    <property type="term" value="P:glucosamine catabolic process"/>
    <property type="evidence" value="ECO:0007669"/>
    <property type="project" value="TreeGrafter"/>
</dbReference>
<dbReference type="GO" id="GO:0006046">
    <property type="term" value="P:N-acetylglucosamine catabolic process"/>
    <property type="evidence" value="ECO:0007669"/>
    <property type="project" value="TreeGrafter"/>
</dbReference>
<dbReference type="GO" id="GO:0019262">
    <property type="term" value="P:N-acetylneuraminate catabolic process"/>
    <property type="evidence" value="ECO:0007669"/>
    <property type="project" value="UniProtKB-UniRule"/>
</dbReference>
<dbReference type="CDD" id="cd01399">
    <property type="entry name" value="GlcN6P_deaminase"/>
    <property type="match status" value="1"/>
</dbReference>
<dbReference type="FunFam" id="3.40.50.1360:FF:000002">
    <property type="entry name" value="Glucosamine-6-phosphate deaminase"/>
    <property type="match status" value="1"/>
</dbReference>
<dbReference type="Gene3D" id="3.40.50.1360">
    <property type="match status" value="1"/>
</dbReference>
<dbReference type="HAMAP" id="MF_01241">
    <property type="entry name" value="GlcN6P_deamin"/>
    <property type="match status" value="1"/>
</dbReference>
<dbReference type="InterPro" id="IPR006148">
    <property type="entry name" value="Glc/Gal-6P_isomerase"/>
</dbReference>
<dbReference type="InterPro" id="IPR004547">
    <property type="entry name" value="Glucosamine6P_isomerase"/>
</dbReference>
<dbReference type="InterPro" id="IPR018321">
    <property type="entry name" value="Glucosamine6P_isomerase_CS"/>
</dbReference>
<dbReference type="InterPro" id="IPR037171">
    <property type="entry name" value="NagB/RpiA_transferase-like"/>
</dbReference>
<dbReference type="NCBIfam" id="TIGR00502">
    <property type="entry name" value="nagB"/>
    <property type="match status" value="1"/>
</dbReference>
<dbReference type="PANTHER" id="PTHR11280">
    <property type="entry name" value="GLUCOSAMINE-6-PHOSPHATE ISOMERASE"/>
    <property type="match status" value="1"/>
</dbReference>
<dbReference type="PANTHER" id="PTHR11280:SF5">
    <property type="entry name" value="GLUCOSAMINE-6-PHOSPHATE ISOMERASE"/>
    <property type="match status" value="1"/>
</dbReference>
<dbReference type="Pfam" id="PF01182">
    <property type="entry name" value="Glucosamine_iso"/>
    <property type="match status" value="1"/>
</dbReference>
<dbReference type="SUPFAM" id="SSF100950">
    <property type="entry name" value="NagB/RpiA/CoA transferase-like"/>
    <property type="match status" value="1"/>
</dbReference>
<dbReference type="PROSITE" id="PS01161">
    <property type="entry name" value="GLC_GALNAC_ISOMERASE"/>
    <property type="match status" value="1"/>
</dbReference>
<sequence length="267" mass="30298">MRLIPLQTSEQVSRWAARHIVERINRFQPTADRPFVLGLPTGGTPLQTYKELIRLYQAGEVSFQHVVTFNMDEYVGLPKEHPQSYHTFMYRNFFDHIDIQPQNINILNGNTEDHDAECRRYEEKIKSYGKIHLFMGGVGVDGHIAFNEPASSLGSRTRIKTLTEDTLIANSRFFDNDITKVPKYALTVGVATLLDAEEVMLLITGYNKALALQACVEGSVNHMWTVSALQLHKRGIVVCDEPATQELKVKTVKYFTQLETQAIQSVL</sequence>
<proteinExistence type="inferred from homology"/>
<keyword id="KW-0021">Allosteric enzyme</keyword>
<keyword id="KW-0119">Carbohydrate metabolism</keyword>
<keyword id="KW-0378">Hydrolase</keyword>
<keyword id="KW-1185">Reference proteome</keyword>
<comment type="function">
    <text evidence="1">Catalyzes the reversible isomerization-deamination of glucosamine 6-phosphate (GlcN6P) to form fructose 6-phosphate (Fru6P) and ammonium ion.</text>
</comment>
<comment type="catalytic activity">
    <reaction evidence="1">
        <text>alpha-D-glucosamine 6-phosphate + H2O = beta-D-fructose 6-phosphate + NH4(+)</text>
        <dbReference type="Rhea" id="RHEA:12172"/>
        <dbReference type="ChEBI" id="CHEBI:15377"/>
        <dbReference type="ChEBI" id="CHEBI:28938"/>
        <dbReference type="ChEBI" id="CHEBI:57634"/>
        <dbReference type="ChEBI" id="CHEBI:75989"/>
        <dbReference type="EC" id="3.5.99.6"/>
    </reaction>
</comment>
<comment type="activity regulation">
    <text evidence="1">Allosterically activated by N-acetylglucosamine 6-phosphate (GlcNAc6P).</text>
</comment>
<comment type="pathway">
    <text evidence="1">Amino-sugar metabolism; N-acetylneuraminate degradation; D-fructose 6-phosphate from N-acetylneuraminate: step 5/5.</text>
</comment>
<comment type="subunit">
    <text evidence="1">Homohexamer.</text>
</comment>
<comment type="similarity">
    <text evidence="1">Belongs to the glucosamine/galactosamine-6-phosphate isomerase family. NagB subfamily.</text>
</comment>
<gene>
    <name evidence="1" type="primary">nagB</name>
    <name type="ordered locus">APL_1755</name>
</gene>
<name>NAGB_ACTP2</name>
<protein>
    <recommendedName>
        <fullName evidence="1">Glucosamine-6-phosphate deaminase</fullName>
        <ecNumber evidence="1">3.5.99.6</ecNumber>
    </recommendedName>
    <alternativeName>
        <fullName evidence="1">GlcN6P deaminase</fullName>
        <shortName evidence="1">GNPDA</shortName>
    </alternativeName>
    <alternativeName>
        <fullName evidence="1">Glucosamine-6-phosphate isomerase</fullName>
    </alternativeName>
</protein>
<accession>A3N353</accession>
<evidence type="ECO:0000255" key="1">
    <source>
        <dbReference type="HAMAP-Rule" id="MF_01241"/>
    </source>
</evidence>
<organism>
    <name type="scientific">Actinobacillus pleuropneumoniae serotype 5b (strain L20)</name>
    <dbReference type="NCBI Taxonomy" id="416269"/>
    <lineage>
        <taxon>Bacteria</taxon>
        <taxon>Pseudomonadati</taxon>
        <taxon>Pseudomonadota</taxon>
        <taxon>Gammaproteobacteria</taxon>
        <taxon>Pasteurellales</taxon>
        <taxon>Pasteurellaceae</taxon>
        <taxon>Actinobacillus</taxon>
    </lineage>
</organism>
<feature type="chain" id="PRO_1000066947" description="Glucosamine-6-phosphate deaminase">
    <location>
        <begin position="1"/>
        <end position="267"/>
    </location>
</feature>
<feature type="active site" description="Proton acceptor; for enolization step" evidence="1">
    <location>
        <position position="72"/>
    </location>
</feature>
<feature type="active site" description="For ring-opening step" evidence="1">
    <location>
        <position position="141"/>
    </location>
</feature>
<feature type="active site" description="Proton acceptor; for ring-opening step" evidence="1">
    <location>
        <position position="143"/>
    </location>
</feature>
<feature type="active site" description="For ring-opening step" evidence="1">
    <location>
        <position position="148"/>
    </location>
</feature>
<feature type="site" description="Part of the allosteric site" evidence="1">
    <location>
        <position position="151"/>
    </location>
</feature>
<feature type="site" description="Part of the allosteric site" evidence="1">
    <location>
        <position position="158"/>
    </location>
</feature>
<feature type="site" description="Part of the allosteric site" evidence="1">
    <location>
        <position position="160"/>
    </location>
</feature>
<feature type="site" description="Part of the allosteric site" evidence="1">
    <location>
        <position position="161"/>
    </location>
</feature>
<feature type="site" description="Part of the allosteric site" evidence="1">
    <location>
        <position position="254"/>
    </location>
</feature>